<evidence type="ECO:0000255" key="1">
    <source>
        <dbReference type="HAMAP-Rule" id="MF_01102"/>
    </source>
</evidence>
<evidence type="ECO:0000305" key="2"/>
<feature type="chain" id="PRO_0000347985" description="tRNA 5-methylaminomethyl-2-thiouridine biosynthesis bifunctional protein MnmC">
    <location>
        <begin position="1"/>
        <end position="668"/>
    </location>
</feature>
<feature type="region of interest" description="tRNA (mnm(5)s(2)U34)-methyltransferase">
    <location>
        <begin position="1"/>
        <end position="245"/>
    </location>
</feature>
<feature type="region of interest" description="FAD-dependent cmnm(5)s(2)U34 oxidoreductase">
    <location>
        <begin position="270"/>
        <end position="668"/>
    </location>
</feature>
<reference key="1">
    <citation type="journal article" date="2006" name="Proc. Natl. Acad. Sci. U.S.A.">
        <title>Identification of genes subject to positive selection in uropathogenic strains of Escherichia coli: a comparative genomics approach.</title>
        <authorList>
            <person name="Chen S.L."/>
            <person name="Hung C.-S."/>
            <person name="Xu J."/>
            <person name="Reigstad C.S."/>
            <person name="Magrini V."/>
            <person name="Sabo A."/>
            <person name="Blasiar D."/>
            <person name="Bieri T."/>
            <person name="Meyer R.R."/>
            <person name="Ozersky P."/>
            <person name="Armstrong J.R."/>
            <person name="Fulton R.S."/>
            <person name="Latreille J.P."/>
            <person name="Spieth J."/>
            <person name="Hooton T.M."/>
            <person name="Mardis E.R."/>
            <person name="Hultgren S.J."/>
            <person name="Gordon J.I."/>
        </authorList>
    </citation>
    <scope>NUCLEOTIDE SEQUENCE [LARGE SCALE GENOMIC DNA]</scope>
    <source>
        <strain>UTI89 / UPEC</strain>
    </source>
</reference>
<protein>
    <recommendedName>
        <fullName evidence="1">tRNA 5-methylaminomethyl-2-thiouridine biosynthesis bifunctional protein MnmC</fullName>
        <shortName evidence="1">tRNA mnm(5)s(2)U biosynthesis bifunctional protein</shortName>
    </recommendedName>
    <domain>
        <recommendedName>
            <fullName evidence="1">tRNA (mnm(5)s(2)U34)-methyltransferase</fullName>
            <ecNumber evidence="1">2.1.1.61</ecNumber>
        </recommendedName>
    </domain>
    <domain>
        <recommendedName>
            <fullName evidence="1">FAD-dependent cmnm(5)s(2)U34 oxidoreductase</fullName>
            <ecNumber evidence="1">1.5.-.-</ecNumber>
        </recommendedName>
    </domain>
</protein>
<keyword id="KW-0963">Cytoplasm</keyword>
<keyword id="KW-0274">FAD</keyword>
<keyword id="KW-0285">Flavoprotein</keyword>
<keyword id="KW-0489">Methyltransferase</keyword>
<keyword id="KW-0511">Multifunctional enzyme</keyword>
<keyword id="KW-0560">Oxidoreductase</keyword>
<keyword id="KW-0949">S-adenosyl-L-methionine</keyword>
<keyword id="KW-0808">Transferase</keyword>
<keyword id="KW-0819">tRNA processing</keyword>
<comment type="function">
    <text evidence="1">Catalyzes the last two steps in the biosynthesis of 5-methylaminomethyl-2-thiouridine (mnm(5)s(2)U) at the wobble position (U34) in tRNA. Catalyzes the FAD-dependent demodification of cmnm(5)s(2)U34 to nm(5)s(2)U34, followed by the transfer of a methyl group from S-adenosyl-L-methionine to nm(5)s(2)U34, to form mnm(5)s(2)U34.</text>
</comment>
<comment type="catalytic activity">
    <reaction evidence="1">
        <text>5-aminomethyl-2-thiouridine(34) in tRNA + S-adenosyl-L-methionine = 5-methylaminomethyl-2-thiouridine(34) in tRNA + S-adenosyl-L-homocysteine + H(+)</text>
        <dbReference type="Rhea" id="RHEA:19569"/>
        <dbReference type="Rhea" id="RHEA-COMP:10195"/>
        <dbReference type="Rhea" id="RHEA-COMP:10197"/>
        <dbReference type="ChEBI" id="CHEBI:15378"/>
        <dbReference type="ChEBI" id="CHEBI:57856"/>
        <dbReference type="ChEBI" id="CHEBI:59789"/>
        <dbReference type="ChEBI" id="CHEBI:74454"/>
        <dbReference type="ChEBI" id="CHEBI:74455"/>
        <dbReference type="EC" id="2.1.1.61"/>
    </reaction>
</comment>
<comment type="cofactor">
    <cofactor evidence="1">
        <name>FAD</name>
        <dbReference type="ChEBI" id="CHEBI:57692"/>
    </cofactor>
</comment>
<comment type="subcellular location">
    <subcellularLocation>
        <location evidence="1">Cytoplasm</location>
    </subcellularLocation>
</comment>
<comment type="similarity">
    <text evidence="1">In the N-terminal section; belongs to the methyltransferase superfamily. tRNA (mnm(5)s(2)U34)-methyltransferase family.</text>
</comment>
<comment type="similarity">
    <text evidence="1">In the C-terminal section; belongs to the DAO family.</text>
</comment>
<comment type="sequence caution" evidence="2">
    <conflict type="erroneous initiation">
        <sequence resource="EMBL-CDS" id="ABE08076"/>
    </conflict>
</comment>
<organism>
    <name type="scientific">Escherichia coli (strain UTI89 / UPEC)</name>
    <dbReference type="NCBI Taxonomy" id="364106"/>
    <lineage>
        <taxon>Bacteria</taxon>
        <taxon>Pseudomonadati</taxon>
        <taxon>Pseudomonadota</taxon>
        <taxon>Gammaproteobacteria</taxon>
        <taxon>Enterobacterales</taxon>
        <taxon>Enterobacteriaceae</taxon>
        <taxon>Escherichia</taxon>
    </lineage>
</organism>
<accession>Q1R988</accession>
<dbReference type="EC" id="2.1.1.61" evidence="1"/>
<dbReference type="EC" id="1.5.-.-" evidence="1"/>
<dbReference type="EMBL" id="CP000243">
    <property type="protein sequence ID" value="ABE08076.1"/>
    <property type="status" value="ALT_INIT"/>
    <property type="molecule type" value="Genomic_DNA"/>
</dbReference>
<dbReference type="RefSeq" id="WP_000683753.1">
    <property type="nucleotide sequence ID" value="NZ_CP064825.1"/>
</dbReference>
<dbReference type="SMR" id="Q1R988"/>
<dbReference type="KEGG" id="eci:UTI89_C2609"/>
<dbReference type="HOGENOM" id="CLU_022427_1_0_6"/>
<dbReference type="Proteomes" id="UP000001952">
    <property type="component" value="Chromosome"/>
</dbReference>
<dbReference type="GO" id="GO:0005737">
    <property type="term" value="C:cytoplasm"/>
    <property type="evidence" value="ECO:0007669"/>
    <property type="project" value="UniProtKB-SubCell"/>
</dbReference>
<dbReference type="GO" id="GO:0050660">
    <property type="term" value="F:flavin adenine dinucleotide binding"/>
    <property type="evidence" value="ECO:0007669"/>
    <property type="project" value="UniProtKB-UniRule"/>
</dbReference>
<dbReference type="GO" id="GO:0016645">
    <property type="term" value="F:oxidoreductase activity, acting on the CH-NH group of donors"/>
    <property type="evidence" value="ECO:0007669"/>
    <property type="project" value="InterPro"/>
</dbReference>
<dbReference type="GO" id="GO:0004808">
    <property type="term" value="F:tRNA (5-methylaminomethyl-2-thiouridylate)(34)-methyltransferase activity"/>
    <property type="evidence" value="ECO:0007669"/>
    <property type="project" value="UniProtKB-EC"/>
</dbReference>
<dbReference type="GO" id="GO:0032259">
    <property type="term" value="P:methylation"/>
    <property type="evidence" value="ECO:0007669"/>
    <property type="project" value="UniProtKB-KW"/>
</dbReference>
<dbReference type="GO" id="GO:0002098">
    <property type="term" value="P:tRNA wobble uridine modification"/>
    <property type="evidence" value="ECO:0007669"/>
    <property type="project" value="TreeGrafter"/>
</dbReference>
<dbReference type="FunFam" id="3.40.50.150:FF:000107">
    <property type="entry name" value="tRNA 5-methylaminomethyl-2-thiouridine biosynthesis bifunctional protein MnmC"/>
    <property type="match status" value="1"/>
</dbReference>
<dbReference type="Gene3D" id="3.30.9.10">
    <property type="entry name" value="D-Amino Acid Oxidase, subunit A, domain 2"/>
    <property type="match status" value="1"/>
</dbReference>
<dbReference type="Gene3D" id="3.50.50.60">
    <property type="entry name" value="FAD/NAD(P)-binding domain"/>
    <property type="match status" value="1"/>
</dbReference>
<dbReference type="Gene3D" id="3.40.50.150">
    <property type="entry name" value="Vaccinia Virus protein VP39"/>
    <property type="match status" value="1"/>
</dbReference>
<dbReference type="HAMAP" id="MF_01102">
    <property type="entry name" value="MnmC"/>
    <property type="match status" value="1"/>
</dbReference>
<dbReference type="InterPro" id="IPR006076">
    <property type="entry name" value="FAD-dep_OxRdtase"/>
</dbReference>
<dbReference type="InterPro" id="IPR036188">
    <property type="entry name" value="FAD/NAD-bd_sf"/>
</dbReference>
<dbReference type="InterPro" id="IPR008471">
    <property type="entry name" value="MnmC-like_methylTransf"/>
</dbReference>
<dbReference type="InterPro" id="IPR029063">
    <property type="entry name" value="SAM-dependent_MTases_sf"/>
</dbReference>
<dbReference type="InterPro" id="IPR023032">
    <property type="entry name" value="tRNA_MAMT_biosynth_bifunc_MnmC"/>
</dbReference>
<dbReference type="InterPro" id="IPR047785">
    <property type="entry name" value="tRNA_MNMC2"/>
</dbReference>
<dbReference type="InterPro" id="IPR017610">
    <property type="entry name" value="tRNA_S-uridine_synth_MnmC_C"/>
</dbReference>
<dbReference type="NCBIfam" id="TIGR03197">
    <property type="entry name" value="MnmC_Cterm"/>
    <property type="match status" value="1"/>
</dbReference>
<dbReference type="NCBIfam" id="NF002480">
    <property type="entry name" value="PRK01747.1-1"/>
    <property type="match status" value="1"/>
</dbReference>
<dbReference type="NCBIfam" id="NF002481">
    <property type="entry name" value="PRK01747.1-2"/>
    <property type="match status" value="1"/>
</dbReference>
<dbReference type="NCBIfam" id="NF002482">
    <property type="entry name" value="PRK01747.1-3"/>
    <property type="match status" value="1"/>
</dbReference>
<dbReference type="NCBIfam" id="NF002484">
    <property type="entry name" value="PRK01747.1-5"/>
    <property type="match status" value="1"/>
</dbReference>
<dbReference type="NCBIfam" id="NF033855">
    <property type="entry name" value="tRNA_MNMC2"/>
    <property type="match status" value="1"/>
</dbReference>
<dbReference type="PANTHER" id="PTHR13847">
    <property type="entry name" value="SARCOSINE DEHYDROGENASE-RELATED"/>
    <property type="match status" value="1"/>
</dbReference>
<dbReference type="PANTHER" id="PTHR13847:SF283">
    <property type="entry name" value="TRNA 5-METHYLAMINOMETHYL-2-THIOURIDINE BIOSYNTHESIS BIFUNCTIONAL PROTEIN MNMC"/>
    <property type="match status" value="1"/>
</dbReference>
<dbReference type="Pfam" id="PF01266">
    <property type="entry name" value="DAO"/>
    <property type="match status" value="1"/>
</dbReference>
<dbReference type="Pfam" id="PF05430">
    <property type="entry name" value="Methyltransf_30"/>
    <property type="match status" value="1"/>
</dbReference>
<dbReference type="SUPFAM" id="SSF51905">
    <property type="entry name" value="FAD/NAD(P)-binding domain"/>
    <property type="match status" value="1"/>
</dbReference>
<gene>
    <name evidence="1" type="primary">mnmC</name>
    <name type="ordered locus">UTI89_C2609</name>
</gene>
<proteinExistence type="inferred from homology"/>
<name>MNMC_ECOUT</name>
<sequence length="668" mass="74368">MKHYSIQPANLEFNAEGTPVSRDFDDVYFSNDNGLEETRYVFLGGNHLEARFPEHPHPLFVVAESGFGTGLNFLTLWQAFDQFREAHPQAQLQRLHFISFEKFPLTRADLALAHQHWPELAPWAEQLQAQWPLPLPGCHRLLLDEGRITLDLWFGDINELTSQLDDSLNQKVDAWFLDGFAPAKNPDMWTQNLFNAMARLARPGSTLATFTSAGFVRRGLQEAGFTMQKRKGFGRKREMLCGVMEQTLPLPCSTPWFNRTGSNKQEAAIIGGGIASALLSLALLRRGWQVTLYCADEAPALGASGNRQGALYPLLSKHDEALNRFFSNAFTFARRFYDLLPVKFDHDWCGVTQLGWDEKSQHKIAQMLSMDLPAELAVAVEANAVEQITGVATNCSGITYPQGGWLCPAELTRNVLKLAQQQGLQIHYQYQLQDLSRKDDGWLLNFAGDQQATHSVVVLANGHQISRFSQTSSLPVYSVAGQVSHIPTTPELAELKQVLCYDGYLTPQNTANQHHCIGASYHRGSEETAYSDEDQQQNRQRLIDCFPHAQWAKEVDVSGKEARCGVRCATRDHLPMVGNVPDYDATLVEYASLAEKKDEAVSAPVYDDLFMFAALGSRGLCSAPLCAEILAAQMSEEPIPMDASTLAALNPNRLWVRKLLKGKAVKAG</sequence>